<organism>
    <name type="scientific">Escherichia coli (strain K12)</name>
    <dbReference type="NCBI Taxonomy" id="83333"/>
    <lineage>
        <taxon>Bacteria</taxon>
        <taxon>Pseudomonadati</taxon>
        <taxon>Pseudomonadota</taxon>
        <taxon>Gammaproteobacteria</taxon>
        <taxon>Enterobacterales</taxon>
        <taxon>Enterobacteriaceae</taxon>
        <taxon>Escherichia</taxon>
    </lineage>
</organism>
<gene>
    <name type="primary">insB1</name>
    <name type="ordered locus">b0021</name>
    <name type="ordered locus">JW0020</name>
</gene>
<dbReference type="EMBL" id="J01729">
    <property type="protein sequence ID" value="AAA96229.1"/>
    <property type="status" value="ALT_INIT"/>
    <property type="molecule type" value="Genomic_DNA"/>
</dbReference>
<dbReference type="EMBL" id="X52534">
    <property type="status" value="NOT_ANNOTATED_CDS"/>
    <property type="molecule type" value="Genomic_DNA"/>
</dbReference>
<dbReference type="EMBL" id="U00096">
    <property type="protein sequence ID" value="AAC73132.1"/>
    <property type="molecule type" value="Genomic_DNA"/>
</dbReference>
<dbReference type="EMBL" id="AP009048">
    <property type="protein sequence ID" value="BAE76033.1"/>
    <property type="molecule type" value="Genomic_DNA"/>
</dbReference>
<dbReference type="PIR" id="JN0135">
    <property type="entry name" value="JN0135"/>
</dbReference>
<dbReference type="RefSeq" id="NP_414562.1">
    <property type="nucleotide sequence ID" value="NC_000913.3"/>
</dbReference>
<dbReference type="FunCoup" id="P0CF25">
    <property type="interactions" value="9"/>
</dbReference>
<dbReference type="STRING" id="511145.b0021"/>
<dbReference type="PaxDb" id="511145-b0021"/>
<dbReference type="EnsemblBacteria" id="AAC73132">
    <property type="protein sequence ID" value="AAC73132"/>
    <property type="gene ID" value="b0021"/>
</dbReference>
<dbReference type="GeneID" id="944743"/>
<dbReference type="KEGG" id="ecj:JW0020"/>
<dbReference type="KEGG" id="eco:b0021"/>
<dbReference type="KEGG" id="eco:b1893"/>
<dbReference type="KEGG" id="eco:b3445"/>
<dbReference type="KEGG" id="ecoc:C3026_17555"/>
<dbReference type="KEGG" id="ecoc:C3026_18660"/>
<dbReference type="EchoBASE" id="EB4700"/>
<dbReference type="eggNOG" id="COG1662">
    <property type="taxonomic scope" value="Bacteria"/>
</dbReference>
<dbReference type="HOGENOM" id="CLU_076276_2_0_6"/>
<dbReference type="InParanoid" id="P0CF25"/>
<dbReference type="OMA" id="VEICRAD"/>
<dbReference type="PhylomeDB" id="P0CF25"/>
<dbReference type="BioCyc" id="EcoCyc:G7762-MONOMER"/>
<dbReference type="PRO" id="PR:P0CF25"/>
<dbReference type="Proteomes" id="UP000000625">
    <property type="component" value="Chromosome"/>
</dbReference>
<dbReference type="GO" id="GO:0003677">
    <property type="term" value="F:DNA binding"/>
    <property type="evidence" value="ECO:0007669"/>
    <property type="project" value="InterPro"/>
</dbReference>
<dbReference type="GO" id="GO:0004803">
    <property type="term" value="F:transposase activity"/>
    <property type="evidence" value="ECO:0007669"/>
    <property type="project" value="InterPro"/>
</dbReference>
<dbReference type="GO" id="GO:0006313">
    <property type="term" value="P:DNA transposition"/>
    <property type="evidence" value="ECO:0000318"/>
    <property type="project" value="GO_Central"/>
</dbReference>
<dbReference type="InterPro" id="IPR005063">
    <property type="entry name" value="Transposase_27"/>
</dbReference>
<dbReference type="InterPro" id="IPR051354">
    <property type="entry name" value="Transposase_27_IS1"/>
</dbReference>
<dbReference type="NCBIfam" id="NF033558">
    <property type="entry name" value="transpos_IS1"/>
    <property type="match status" value="1"/>
</dbReference>
<dbReference type="PANTHER" id="PTHR33293">
    <property type="entry name" value="INSERTION ELEMENT IS1 1 PROTEIN INSB-RELATED"/>
    <property type="match status" value="1"/>
</dbReference>
<dbReference type="PANTHER" id="PTHR33293:SF1">
    <property type="entry name" value="INSERTION ELEMENT IS1 1 PROTEIN INSB-RELATED"/>
    <property type="match status" value="1"/>
</dbReference>
<dbReference type="Pfam" id="PF03400">
    <property type="entry name" value="DDE_Tnp_IS1"/>
    <property type="match status" value="1"/>
</dbReference>
<feature type="chain" id="PRO_0000075401" description="Insertion element IS1 1 protein InsB">
    <location>
        <begin position="1"/>
        <end position="167"/>
    </location>
</feature>
<name>INSB1_ECOLI</name>
<sequence>MPGNSPHYGRWPQHDFTSLKKLRPQSVTSRIQPGSDVIVCAEMDEQWGYVGAKSRQRWLFYAYDSLRKTVVAHVFGERTMATLGRLMSLLSPFDVVIWMTDGWPLYESRLKGKLHVISKRYTQRIERHNLNLRQHLARLGRKSLSFSKSVELHDKVIGHYLNIKHYQ</sequence>
<protein>
    <recommendedName>
        <fullName>Insertion element IS1 1 protein InsB</fullName>
    </recommendedName>
    <alternativeName>
        <fullName>IS1a</fullName>
    </alternativeName>
</protein>
<proteinExistence type="inferred from homology"/>
<reference key="1">
    <citation type="journal article" date="1979" name="Mol. Gen. Genet.">
        <title>DNA sequence of the transposable element IS1.</title>
        <authorList>
            <person name="Johnsrud L."/>
        </authorList>
    </citation>
    <scope>NUCLEOTIDE SEQUENCE [GENOMIC DNA]</scope>
</reference>
<reference key="2">
    <citation type="journal article" date="1991" name="Gene">
        <title>Four types of IS1 with differences in nucleotide sequence reside in the Escherichia coli K-12 chromosome.</title>
        <authorList>
            <person name="Umeda M."/>
            <person name="Ohtsubo E."/>
        </authorList>
    </citation>
    <scope>NUCLEOTIDE SEQUENCE [GENOMIC DNA]</scope>
    <source>
        <strain>K12 / W3110 / ATCC 27325 / DSM 5911</strain>
    </source>
</reference>
<reference key="3">
    <citation type="journal article" date="1992" name="Nucleic Acids Res.">
        <title>Systematic sequencing of the Escherichia coli genome: analysis of the 0-2.4 min region.</title>
        <authorList>
            <person name="Yura T."/>
            <person name="Mori H."/>
            <person name="Nagai H."/>
            <person name="Nagata T."/>
            <person name="Ishihama A."/>
            <person name="Fujita N."/>
            <person name="Isono K."/>
            <person name="Mizobuchi K."/>
            <person name="Nakata A."/>
        </authorList>
    </citation>
    <scope>NUCLEOTIDE SEQUENCE [LARGE SCALE GENOMIC DNA]</scope>
    <source>
        <strain>K12</strain>
    </source>
</reference>
<reference key="4">
    <citation type="journal article" date="1997" name="Science">
        <title>The complete genome sequence of Escherichia coli K-12.</title>
        <authorList>
            <person name="Blattner F.R."/>
            <person name="Plunkett G. III"/>
            <person name="Bloch C.A."/>
            <person name="Perna N.T."/>
            <person name="Burland V."/>
            <person name="Riley M."/>
            <person name="Collado-Vides J."/>
            <person name="Glasner J.D."/>
            <person name="Rode C.K."/>
            <person name="Mayhew G.F."/>
            <person name="Gregor J."/>
            <person name="Davis N.W."/>
            <person name="Kirkpatrick H.A."/>
            <person name="Goeden M.A."/>
            <person name="Rose D.J."/>
            <person name="Mau B."/>
            <person name="Shao Y."/>
        </authorList>
    </citation>
    <scope>NUCLEOTIDE SEQUENCE [LARGE SCALE GENOMIC DNA]</scope>
    <source>
        <strain>K12 / MG1655 / ATCC 47076</strain>
    </source>
</reference>
<reference key="5">
    <citation type="journal article" date="2006" name="Mol. Syst. Biol.">
        <title>Highly accurate genome sequences of Escherichia coli K-12 strains MG1655 and W3110.</title>
        <authorList>
            <person name="Hayashi K."/>
            <person name="Morooka N."/>
            <person name="Yamamoto Y."/>
            <person name="Fujita K."/>
            <person name="Isono K."/>
            <person name="Choi S."/>
            <person name="Ohtsubo E."/>
            <person name="Baba T."/>
            <person name="Wanner B.L."/>
            <person name="Mori H."/>
            <person name="Horiuchi T."/>
        </authorList>
    </citation>
    <scope>NUCLEOTIDE SEQUENCE [LARGE SCALE GENOMIC DNA]</scope>
    <source>
        <strain>K12 / W3110 / ATCC 27325 / DSM 5911</strain>
    </source>
</reference>
<comment type="function">
    <text>Absolutely required for transposition of IS1.</text>
</comment>
<comment type="similarity">
    <text evidence="1">Belongs to the transposase 27 family.</text>
</comment>
<comment type="sequence caution" evidence="1">
    <conflict type="erroneous initiation">
        <sequence resource="EMBL-CDS" id="AAA96229"/>
    </conflict>
    <text>Truncated N-terminus.</text>
</comment>
<keyword id="KW-0233">DNA recombination</keyword>
<keyword id="KW-1185">Reference proteome</keyword>
<keyword id="KW-0814">Transposable element</keyword>
<keyword id="KW-0815">Transposition</keyword>
<accession>P0CF25</accession>
<accession>P03830</accession>
<accession>P77707</accession>
<accession>Q2MCH3</accession>
<evidence type="ECO:0000305" key="1"/>